<sequence>MLDNIKIGLQYCTPKHALTRLVGKLASLEAGKLTTAIIRWFIGQYKVDMSEARNPDPAAYSTFNHFFIRELKEGARPINNDDNIISHPADACVSQLGPIKEGRLFQAKGHYFDACELLGGDKALAEEFVDGDFATLYLSPRDYHRVHMPCDGTLRQMIYVPGDLFSVNPLTAQNVPNLFARNERVVCIFDTAHGPIAQVLVGATIVGSIETVWAGTVTPPTGPEVRRWDYPATGTQAIVLKKGQEMGRFKLGSTVINLFPKDMVRFVEAMKPEQPTRMGEPYAELDSSEKE</sequence>
<organism>
    <name type="scientific">Photobacterium profundum (strain SS9)</name>
    <dbReference type="NCBI Taxonomy" id="298386"/>
    <lineage>
        <taxon>Bacteria</taxon>
        <taxon>Pseudomonadati</taxon>
        <taxon>Pseudomonadota</taxon>
        <taxon>Gammaproteobacteria</taxon>
        <taxon>Vibrionales</taxon>
        <taxon>Vibrionaceae</taxon>
        <taxon>Photobacterium</taxon>
    </lineage>
</organism>
<proteinExistence type="inferred from homology"/>
<gene>
    <name evidence="1" type="primary">psd</name>
    <name type="ordered locus">PBPRA3372</name>
</gene>
<dbReference type="EC" id="4.1.1.65" evidence="1"/>
<dbReference type="EMBL" id="CR378673">
    <property type="protein sequence ID" value="CAG21657.1"/>
    <property type="molecule type" value="Genomic_DNA"/>
</dbReference>
<dbReference type="RefSeq" id="WP_011219903.1">
    <property type="nucleotide sequence ID" value="NC_006370.1"/>
</dbReference>
<dbReference type="SMR" id="Q6LM21"/>
<dbReference type="STRING" id="298386.PBPRA3372"/>
<dbReference type="KEGG" id="ppr:PBPRA3372"/>
<dbReference type="eggNOG" id="COG0688">
    <property type="taxonomic scope" value="Bacteria"/>
</dbReference>
<dbReference type="HOGENOM" id="CLU_029061_4_1_6"/>
<dbReference type="UniPathway" id="UPA00558">
    <property type="reaction ID" value="UER00616"/>
</dbReference>
<dbReference type="Proteomes" id="UP000000593">
    <property type="component" value="Chromosome 1"/>
</dbReference>
<dbReference type="GO" id="GO:0005886">
    <property type="term" value="C:plasma membrane"/>
    <property type="evidence" value="ECO:0007669"/>
    <property type="project" value="UniProtKB-SubCell"/>
</dbReference>
<dbReference type="GO" id="GO:0004609">
    <property type="term" value="F:phosphatidylserine decarboxylase activity"/>
    <property type="evidence" value="ECO:0007669"/>
    <property type="project" value="UniProtKB-UniRule"/>
</dbReference>
<dbReference type="GO" id="GO:0006646">
    <property type="term" value="P:phosphatidylethanolamine biosynthetic process"/>
    <property type="evidence" value="ECO:0007669"/>
    <property type="project" value="UniProtKB-UniRule"/>
</dbReference>
<dbReference type="HAMAP" id="MF_00662">
    <property type="entry name" value="PS_decarb_PSD_B_type1"/>
    <property type="match status" value="1"/>
</dbReference>
<dbReference type="InterPro" id="IPR003817">
    <property type="entry name" value="PS_Dcarbxylase"/>
</dbReference>
<dbReference type="InterPro" id="IPR033177">
    <property type="entry name" value="PSD-B"/>
</dbReference>
<dbReference type="InterPro" id="IPR033178">
    <property type="entry name" value="PSD_type1_pro"/>
</dbReference>
<dbReference type="NCBIfam" id="TIGR00163">
    <property type="entry name" value="PS_decarb"/>
    <property type="match status" value="1"/>
</dbReference>
<dbReference type="PANTHER" id="PTHR10067">
    <property type="entry name" value="PHOSPHATIDYLSERINE DECARBOXYLASE"/>
    <property type="match status" value="1"/>
</dbReference>
<dbReference type="PANTHER" id="PTHR10067:SF6">
    <property type="entry name" value="PHOSPHATIDYLSERINE DECARBOXYLASE PROENZYME, MITOCHONDRIAL"/>
    <property type="match status" value="1"/>
</dbReference>
<dbReference type="Pfam" id="PF02666">
    <property type="entry name" value="PS_Dcarbxylase"/>
    <property type="match status" value="1"/>
</dbReference>
<feature type="chain" id="PRO_0000029685" description="Phosphatidylserine decarboxylase beta chain" evidence="1">
    <location>
        <begin position="1"/>
        <end position="252"/>
    </location>
</feature>
<feature type="chain" id="PRO_0000029686" description="Phosphatidylserine decarboxylase alpha chain" evidence="1">
    <location>
        <begin position="253"/>
        <end position="291"/>
    </location>
</feature>
<feature type="active site" description="Charge relay system; for autoendoproteolytic cleavage activity" evidence="1">
    <location>
        <position position="90"/>
    </location>
</feature>
<feature type="active site" description="Charge relay system; for autoendoproteolytic cleavage activity" evidence="1">
    <location>
        <position position="147"/>
    </location>
</feature>
<feature type="active site" description="Charge relay system; for autoendoproteolytic cleavage activity" evidence="1">
    <location>
        <position position="253"/>
    </location>
</feature>
<feature type="active site" description="Schiff-base intermediate with substrate; via pyruvic acid; for decarboxylase activity" evidence="1">
    <location>
        <position position="253"/>
    </location>
</feature>
<feature type="site" description="Cleavage (non-hydrolytic); by autocatalysis" evidence="1">
    <location>
        <begin position="252"/>
        <end position="253"/>
    </location>
</feature>
<feature type="modified residue" description="Pyruvic acid (Ser); by autocatalysis" evidence="1">
    <location>
        <position position="253"/>
    </location>
</feature>
<reference key="1">
    <citation type="journal article" date="2005" name="Science">
        <title>Life at depth: Photobacterium profundum genome sequence and expression analysis.</title>
        <authorList>
            <person name="Vezzi A."/>
            <person name="Campanaro S."/>
            <person name="D'Angelo M."/>
            <person name="Simonato F."/>
            <person name="Vitulo N."/>
            <person name="Lauro F.M."/>
            <person name="Cestaro A."/>
            <person name="Malacrida G."/>
            <person name="Simionati B."/>
            <person name="Cannata N."/>
            <person name="Romualdi C."/>
            <person name="Bartlett D.H."/>
            <person name="Valle G."/>
        </authorList>
    </citation>
    <scope>NUCLEOTIDE SEQUENCE [LARGE SCALE GENOMIC DNA]</scope>
    <source>
        <strain>ATCC BAA-1253 / SS9</strain>
    </source>
</reference>
<keyword id="KW-1003">Cell membrane</keyword>
<keyword id="KW-0210">Decarboxylase</keyword>
<keyword id="KW-0444">Lipid biosynthesis</keyword>
<keyword id="KW-0443">Lipid metabolism</keyword>
<keyword id="KW-0456">Lyase</keyword>
<keyword id="KW-0472">Membrane</keyword>
<keyword id="KW-0594">Phospholipid biosynthesis</keyword>
<keyword id="KW-1208">Phospholipid metabolism</keyword>
<keyword id="KW-0670">Pyruvate</keyword>
<keyword id="KW-1185">Reference proteome</keyword>
<keyword id="KW-0865">Zymogen</keyword>
<name>PSD_PHOPR</name>
<accession>Q6LM21</accession>
<evidence type="ECO:0000255" key="1">
    <source>
        <dbReference type="HAMAP-Rule" id="MF_00662"/>
    </source>
</evidence>
<comment type="function">
    <text evidence="1">Catalyzes the formation of phosphatidylethanolamine (PtdEtn) from phosphatidylserine (PtdSer).</text>
</comment>
<comment type="catalytic activity">
    <reaction evidence="1">
        <text>a 1,2-diacyl-sn-glycero-3-phospho-L-serine + H(+) = a 1,2-diacyl-sn-glycero-3-phosphoethanolamine + CO2</text>
        <dbReference type="Rhea" id="RHEA:20828"/>
        <dbReference type="ChEBI" id="CHEBI:15378"/>
        <dbReference type="ChEBI" id="CHEBI:16526"/>
        <dbReference type="ChEBI" id="CHEBI:57262"/>
        <dbReference type="ChEBI" id="CHEBI:64612"/>
        <dbReference type="EC" id="4.1.1.65"/>
    </reaction>
</comment>
<comment type="cofactor">
    <cofactor evidence="1">
        <name>pyruvate</name>
        <dbReference type="ChEBI" id="CHEBI:15361"/>
    </cofactor>
    <text evidence="1">Binds 1 pyruvoyl group covalently per subunit.</text>
</comment>
<comment type="pathway">
    <text evidence="1">Phospholipid metabolism; phosphatidylethanolamine biosynthesis; phosphatidylethanolamine from CDP-diacylglycerol: step 2/2.</text>
</comment>
<comment type="subunit">
    <text evidence="1">Heterodimer of a large membrane-associated beta subunit and a small pyruvoyl-containing alpha subunit.</text>
</comment>
<comment type="subcellular location">
    <subcellularLocation>
        <location evidence="1">Cell membrane</location>
        <topology evidence="1">Peripheral membrane protein</topology>
    </subcellularLocation>
</comment>
<comment type="PTM">
    <text evidence="1">Is synthesized initially as an inactive proenzyme. Formation of the active enzyme involves a self-maturation process in which the active site pyruvoyl group is generated from an internal serine residue via an autocatalytic post-translational modification. Two non-identical subunits are generated from the proenzyme in this reaction, and the pyruvate is formed at the N-terminus of the alpha chain, which is derived from the carboxyl end of the proenzyme. The autoendoproteolytic cleavage occurs by a canonical serine protease mechanism, in which the side chain hydroxyl group of the serine supplies its oxygen atom to form the C-terminus of the beta chain, while the remainder of the serine residue undergoes an oxidative deamination to produce ammonia and the pyruvoyl prosthetic group on the alpha chain. During this reaction, the Ser that is part of the protease active site of the proenzyme becomes the pyruvoyl prosthetic group, which constitutes an essential element of the active site of the mature decarboxylase.</text>
</comment>
<comment type="similarity">
    <text evidence="1">Belongs to the phosphatidylserine decarboxylase family. PSD-B subfamily. Prokaryotic type I sub-subfamily.</text>
</comment>
<protein>
    <recommendedName>
        <fullName evidence="1">Phosphatidylserine decarboxylase proenzyme</fullName>
        <ecNumber evidence="1">4.1.1.65</ecNumber>
    </recommendedName>
    <component>
        <recommendedName>
            <fullName evidence="1">Phosphatidylserine decarboxylase alpha chain</fullName>
        </recommendedName>
    </component>
    <component>
        <recommendedName>
            <fullName evidence="1">Phosphatidylserine decarboxylase beta chain</fullName>
        </recommendedName>
    </component>
</protein>